<comment type="function">
    <text evidence="1">This protein specifically catalyzes the removal of signal peptides from prolipoproteins.</text>
</comment>
<comment type="catalytic activity">
    <reaction evidence="1">
        <text>Release of signal peptides from bacterial membrane prolipoproteins. Hydrolyzes -Xaa-Yaa-Zaa-|-(S,diacylglyceryl)Cys-, in which Xaa is hydrophobic (preferably Leu), and Yaa (Ala or Ser) and Zaa (Gly or Ala) have small, neutral side chains.</text>
        <dbReference type="EC" id="3.4.23.36"/>
    </reaction>
</comment>
<comment type="pathway">
    <text evidence="1">Protein modification; lipoprotein biosynthesis (signal peptide cleavage).</text>
</comment>
<comment type="subcellular location">
    <subcellularLocation>
        <location evidence="1">Cell membrane</location>
        <topology evidence="1">Multi-pass membrane protein</topology>
    </subcellularLocation>
</comment>
<comment type="similarity">
    <text evidence="1">Belongs to the peptidase A8 family.</text>
</comment>
<name>LSPA_STRPB</name>
<feature type="chain" id="PRO_0000289440" description="Lipoprotein signal peptidase">
    <location>
        <begin position="1"/>
        <end position="152"/>
    </location>
</feature>
<feature type="transmembrane region" description="Helical" evidence="1">
    <location>
        <begin position="5"/>
        <end position="25"/>
    </location>
</feature>
<feature type="transmembrane region" description="Helical" evidence="1">
    <location>
        <begin position="61"/>
        <end position="81"/>
    </location>
</feature>
<feature type="transmembrane region" description="Helical" evidence="1">
    <location>
        <begin position="84"/>
        <end position="104"/>
    </location>
</feature>
<feature type="transmembrane region" description="Helical" evidence="1">
    <location>
        <begin position="125"/>
        <end position="145"/>
    </location>
</feature>
<feature type="active site" evidence="1">
    <location>
        <position position="114"/>
    </location>
</feature>
<feature type="active site" evidence="1">
    <location>
        <position position="130"/>
    </location>
</feature>
<keyword id="KW-0064">Aspartyl protease</keyword>
<keyword id="KW-1003">Cell membrane</keyword>
<keyword id="KW-0378">Hydrolase</keyword>
<keyword id="KW-0472">Membrane</keyword>
<keyword id="KW-0645">Protease</keyword>
<keyword id="KW-0812">Transmembrane</keyword>
<keyword id="KW-1133">Transmembrane helix</keyword>
<gene>
    <name evidence="1" type="primary">lspA</name>
    <name type="ordered locus">MGAS2096_Spy0703</name>
</gene>
<proteinExistence type="inferred from homology"/>
<protein>
    <recommendedName>
        <fullName evidence="1">Lipoprotein signal peptidase</fullName>
        <ecNumber evidence="1">3.4.23.36</ecNumber>
    </recommendedName>
    <alternativeName>
        <fullName evidence="1">Prolipoprotein signal peptidase</fullName>
    </alternativeName>
    <alternativeName>
        <fullName evidence="1">Signal peptidase II</fullName>
        <shortName evidence="1">SPase II</shortName>
    </alternativeName>
</protein>
<sequence length="152" mass="17272">MKKRLFVLSLILLVALDQLSKFWIVSHIALGEVKPFIPGIVSLTYLQNNGAAFSILQDQQWFFVVITVLVIGYAIYYLATHPHLNIWKQLALLLIISGGIGNFIDRLRLAYVIDMVHLDFVDFAIFNVADSYLTVGVILLVICLWKEEDYGN</sequence>
<organism>
    <name type="scientific">Streptococcus pyogenes serotype M12 (strain MGAS2096)</name>
    <dbReference type="NCBI Taxonomy" id="370553"/>
    <lineage>
        <taxon>Bacteria</taxon>
        <taxon>Bacillati</taxon>
        <taxon>Bacillota</taxon>
        <taxon>Bacilli</taxon>
        <taxon>Lactobacillales</taxon>
        <taxon>Streptococcaceae</taxon>
        <taxon>Streptococcus</taxon>
    </lineage>
</organism>
<dbReference type="EC" id="3.4.23.36" evidence="1"/>
<dbReference type="EMBL" id="CP000261">
    <property type="protein sequence ID" value="ABF35755.1"/>
    <property type="molecule type" value="Genomic_DNA"/>
</dbReference>
<dbReference type="SMR" id="Q1JCF3"/>
<dbReference type="KEGG" id="spj:MGAS2096_Spy0703"/>
<dbReference type="HOGENOM" id="CLU_083252_3_3_9"/>
<dbReference type="UniPathway" id="UPA00665"/>
<dbReference type="GO" id="GO:0005886">
    <property type="term" value="C:plasma membrane"/>
    <property type="evidence" value="ECO:0007669"/>
    <property type="project" value="UniProtKB-SubCell"/>
</dbReference>
<dbReference type="GO" id="GO:0004190">
    <property type="term" value="F:aspartic-type endopeptidase activity"/>
    <property type="evidence" value="ECO:0007669"/>
    <property type="project" value="UniProtKB-UniRule"/>
</dbReference>
<dbReference type="GO" id="GO:0006508">
    <property type="term" value="P:proteolysis"/>
    <property type="evidence" value="ECO:0007669"/>
    <property type="project" value="UniProtKB-KW"/>
</dbReference>
<dbReference type="HAMAP" id="MF_00161">
    <property type="entry name" value="LspA"/>
    <property type="match status" value="1"/>
</dbReference>
<dbReference type="InterPro" id="IPR001872">
    <property type="entry name" value="Peptidase_A8"/>
</dbReference>
<dbReference type="NCBIfam" id="TIGR00077">
    <property type="entry name" value="lspA"/>
    <property type="match status" value="1"/>
</dbReference>
<dbReference type="PANTHER" id="PTHR33695">
    <property type="entry name" value="LIPOPROTEIN SIGNAL PEPTIDASE"/>
    <property type="match status" value="1"/>
</dbReference>
<dbReference type="PANTHER" id="PTHR33695:SF1">
    <property type="entry name" value="LIPOPROTEIN SIGNAL PEPTIDASE"/>
    <property type="match status" value="1"/>
</dbReference>
<dbReference type="Pfam" id="PF01252">
    <property type="entry name" value="Peptidase_A8"/>
    <property type="match status" value="1"/>
</dbReference>
<dbReference type="PRINTS" id="PR00781">
    <property type="entry name" value="LIPOSIGPTASE"/>
</dbReference>
<dbReference type="PROSITE" id="PS00855">
    <property type="entry name" value="SPASE_II"/>
    <property type="match status" value="1"/>
</dbReference>
<accession>Q1JCF3</accession>
<evidence type="ECO:0000255" key="1">
    <source>
        <dbReference type="HAMAP-Rule" id="MF_00161"/>
    </source>
</evidence>
<reference key="1">
    <citation type="journal article" date="2006" name="Proc. Natl. Acad. Sci. U.S.A.">
        <title>Molecular genetic anatomy of inter- and intraserotype variation in the human bacterial pathogen group A Streptococcus.</title>
        <authorList>
            <person name="Beres S.B."/>
            <person name="Richter E.W."/>
            <person name="Nagiec M.J."/>
            <person name="Sumby P."/>
            <person name="Porcella S.F."/>
            <person name="DeLeo F.R."/>
            <person name="Musser J.M."/>
        </authorList>
    </citation>
    <scope>NUCLEOTIDE SEQUENCE [LARGE SCALE GENOMIC DNA]</scope>
    <source>
        <strain>MGAS2096</strain>
    </source>
</reference>